<organism>
    <name type="scientific">Ailuropoda melanoleuca</name>
    <name type="common">Giant panda</name>
    <dbReference type="NCBI Taxonomy" id="9646"/>
    <lineage>
        <taxon>Eukaryota</taxon>
        <taxon>Metazoa</taxon>
        <taxon>Chordata</taxon>
        <taxon>Craniata</taxon>
        <taxon>Vertebrata</taxon>
        <taxon>Euteleostomi</taxon>
        <taxon>Mammalia</taxon>
        <taxon>Eutheria</taxon>
        <taxon>Laurasiatheria</taxon>
        <taxon>Carnivora</taxon>
        <taxon>Caniformia</taxon>
        <taxon>Ursidae</taxon>
        <taxon>Ailuropoda</taxon>
    </lineage>
</organism>
<name>COX2_AILME</name>
<protein>
    <recommendedName>
        <fullName>Cytochrome c oxidase subunit 2</fullName>
        <ecNumber>7.1.1.9</ecNumber>
    </recommendedName>
    <alternativeName>
        <fullName>Cytochrome c oxidase polypeptide II</fullName>
    </alternativeName>
</protein>
<geneLocation type="mitochondrion"/>
<feature type="chain" id="PRO_0000253988" description="Cytochrome c oxidase subunit 2">
    <location>
        <begin position="1"/>
        <end position="227"/>
    </location>
</feature>
<feature type="topological domain" description="Mitochondrial intermembrane" evidence="4">
    <location>
        <begin position="1"/>
        <end position="14"/>
    </location>
</feature>
<feature type="transmembrane region" description="Helical; Name=I" evidence="4">
    <location>
        <begin position="15"/>
        <end position="45"/>
    </location>
</feature>
<feature type="topological domain" description="Mitochondrial matrix" evidence="4">
    <location>
        <begin position="46"/>
        <end position="59"/>
    </location>
</feature>
<feature type="transmembrane region" description="Helical; Name=II" evidence="4">
    <location>
        <begin position="60"/>
        <end position="87"/>
    </location>
</feature>
<feature type="topological domain" description="Mitochondrial intermembrane" evidence="4">
    <location>
        <begin position="88"/>
        <end position="227"/>
    </location>
</feature>
<feature type="binding site" evidence="4">
    <location>
        <position position="161"/>
    </location>
    <ligand>
        <name>Cu cation</name>
        <dbReference type="ChEBI" id="CHEBI:23378"/>
        <label>A1</label>
    </ligand>
</feature>
<feature type="binding site" evidence="4">
    <location>
        <position position="196"/>
    </location>
    <ligand>
        <name>Cu cation</name>
        <dbReference type="ChEBI" id="CHEBI:23378"/>
        <label>A1</label>
    </ligand>
</feature>
<feature type="binding site" evidence="4">
    <location>
        <position position="196"/>
    </location>
    <ligand>
        <name>Cu cation</name>
        <dbReference type="ChEBI" id="CHEBI:23378"/>
        <label>A2</label>
    </ligand>
</feature>
<feature type="binding site" evidence="4">
    <location>
        <position position="198"/>
    </location>
    <ligand>
        <name>Cu cation</name>
        <dbReference type="ChEBI" id="CHEBI:23378"/>
        <label>A2</label>
    </ligand>
</feature>
<feature type="binding site" evidence="4">
    <location>
        <position position="198"/>
    </location>
    <ligand>
        <name>Mg(2+)</name>
        <dbReference type="ChEBI" id="CHEBI:18420"/>
        <note>ligand shared with MT-CO1</note>
    </ligand>
</feature>
<feature type="binding site" evidence="4">
    <location>
        <position position="200"/>
    </location>
    <ligand>
        <name>Cu cation</name>
        <dbReference type="ChEBI" id="CHEBI:23378"/>
        <label>A1</label>
    </ligand>
</feature>
<feature type="binding site" evidence="4">
    <location>
        <position position="200"/>
    </location>
    <ligand>
        <name>Cu cation</name>
        <dbReference type="ChEBI" id="CHEBI:23378"/>
        <label>A2</label>
    </ligand>
</feature>
<feature type="binding site" evidence="4">
    <location>
        <position position="204"/>
    </location>
    <ligand>
        <name>Cu cation</name>
        <dbReference type="ChEBI" id="CHEBI:23378"/>
        <label>A2</label>
    </ligand>
</feature>
<feature type="binding site" evidence="4">
    <location>
        <position position="207"/>
    </location>
    <ligand>
        <name>Cu cation</name>
        <dbReference type="ChEBI" id="CHEBI:23378"/>
        <label>A1</label>
    </ligand>
</feature>
<feature type="modified residue" description="Phosphotyrosine" evidence="2">
    <location>
        <position position="218"/>
    </location>
</feature>
<reference key="1">
    <citation type="journal article" date="2005" name="Mol. Phylogenet. Evol.">
        <title>A molecular phylogeny of the Canidae based on six nuclear loci.</title>
        <authorList>
            <person name="Bardeleben C."/>
            <person name="Moore R.L."/>
            <person name="Wayne R.K."/>
        </authorList>
    </citation>
    <scope>NUCLEOTIDE SEQUENCE [GENOMIC DNA]</scope>
</reference>
<reference key="2">
    <citation type="journal article" date="2007" name="BMC Evol. Biol.">
        <title>Analysis of complete mitochondrial genome sequences increases phylogenetic resolution of bears (Ursidae), a mammalian family that experienced rapid speciation.</title>
        <authorList>
            <person name="Yu L."/>
            <person name="Li Y.W."/>
            <person name="Ryder O.A."/>
            <person name="Zhang Y.P."/>
        </authorList>
    </citation>
    <scope>NUCLEOTIDE SEQUENCE [GENOMIC DNA]</scope>
</reference>
<reference key="3">
    <citation type="journal article" date="2007" name="Gene">
        <title>The complete mitochondrial genome and phylogenetic analysis of the giant panda (Ailuropoda melanoleuca).</title>
        <authorList>
            <person name="Peng R."/>
            <person name="Zeng B."/>
            <person name="Meng X."/>
            <person name="Yue B."/>
            <person name="Zhang Z."/>
            <person name="Zou F."/>
        </authorList>
    </citation>
    <scope>NUCLEOTIDE SEQUENCE [LARGE SCALE GENOMIC DNA]</scope>
</reference>
<reference key="4">
    <citation type="journal article" date="2008" name="BMC Evol. Biol.">
        <title>Mitochondrial genomes reveal an explosive radiation of extinct and extant bears near the Miocene-Pliocene boundary.</title>
        <authorList>
            <person name="Krause J."/>
            <person name="Unger T."/>
            <person name="Nocon A."/>
            <person name="Malaspinas A.S."/>
            <person name="Kolokotronis S.O."/>
            <person name="Stiller M."/>
            <person name="Soibelzon L."/>
            <person name="Spriggs H."/>
            <person name="Dear P.H."/>
            <person name="Briggs A.W."/>
            <person name="Bray S.C.E."/>
            <person name="O'Brien S.J."/>
            <person name="Rabeder G."/>
            <person name="Matheus P."/>
            <person name="Cooper A."/>
            <person name="Slatkin M."/>
            <person name="Paabo S."/>
            <person name="Hofreiter M."/>
        </authorList>
    </citation>
    <scope>NUCLEOTIDE SEQUENCE [GENOMIC DNA]</scope>
</reference>
<evidence type="ECO:0000250" key="1">
    <source>
        <dbReference type="UniProtKB" id="P00403"/>
    </source>
</evidence>
<evidence type="ECO:0000250" key="2">
    <source>
        <dbReference type="UniProtKB" id="P00406"/>
    </source>
</evidence>
<evidence type="ECO:0000250" key="3">
    <source>
        <dbReference type="UniProtKB" id="P00410"/>
    </source>
</evidence>
<evidence type="ECO:0000250" key="4">
    <source>
        <dbReference type="UniProtKB" id="P68530"/>
    </source>
</evidence>
<evidence type="ECO:0000305" key="5"/>
<gene>
    <name type="primary">MT-CO2</name>
    <name type="synonym">COII</name>
    <name type="synonym">COXII</name>
    <name type="synonym">MTCO2</name>
</gene>
<accession>Q2Y0B9</accession>
<accession>A5JFJ9</accession>
<comment type="function">
    <text evidence="3">Component of the cytochrome c oxidase, the last enzyme in the mitochondrial electron transport chain which drives oxidative phosphorylation. The respiratory chain contains 3 multisubunit complexes succinate dehydrogenase (complex II, CII), ubiquinol-cytochrome c oxidoreductase (cytochrome b-c1 complex, complex III, CIII) and cytochrome c oxidase (complex IV, CIV), that cooperate to transfer electrons derived from NADH and succinate to molecular oxygen, creating an electrochemical gradient over the inner membrane that drives transmembrane transport and the ATP synthase. Cytochrome c oxidase is the component of the respiratory chain that catalyzes the reduction of oxygen to water. Electrons originating from reduced cytochrome c in the intermembrane space (IMS) are transferred via the dinuclear copper A center (CU(A)) of subunit 2 and heme A of subunit 1 to the active site in subunit 1, a binuclear center (BNC) formed by heme A3 and copper B (CU(B)). The BNC reduces molecular oxygen to 2 water molecules using 4 electrons from cytochrome c in the IMS and 4 protons from the mitochondrial matrix.</text>
</comment>
<comment type="catalytic activity">
    <reaction evidence="3">
        <text>4 Fe(II)-[cytochrome c] + O2 + 8 H(+)(in) = 4 Fe(III)-[cytochrome c] + 2 H2O + 4 H(+)(out)</text>
        <dbReference type="Rhea" id="RHEA:11436"/>
        <dbReference type="Rhea" id="RHEA-COMP:10350"/>
        <dbReference type="Rhea" id="RHEA-COMP:14399"/>
        <dbReference type="ChEBI" id="CHEBI:15377"/>
        <dbReference type="ChEBI" id="CHEBI:15378"/>
        <dbReference type="ChEBI" id="CHEBI:15379"/>
        <dbReference type="ChEBI" id="CHEBI:29033"/>
        <dbReference type="ChEBI" id="CHEBI:29034"/>
        <dbReference type="EC" id="7.1.1.9"/>
    </reaction>
    <physiologicalReaction direction="left-to-right" evidence="3">
        <dbReference type="Rhea" id="RHEA:11437"/>
    </physiologicalReaction>
</comment>
<comment type="cofactor">
    <cofactor evidence="4">
        <name>Cu cation</name>
        <dbReference type="ChEBI" id="CHEBI:23378"/>
    </cofactor>
    <text evidence="4">Binds a dinuclear copper A center per subunit.</text>
</comment>
<comment type="subunit">
    <text evidence="1 4">Component of the cytochrome c oxidase (complex IV, CIV), a multisubunit enzyme composed of 14 subunits. The complex is composed of a catalytic core of 3 subunits MT-CO1, MT-CO2 and MT-CO3, encoded in the mitochondrial DNA, and 11 supernumerary subunits COX4I, COX5A, COX5B, COX6A, COX6B, COX6C, COX7A, COX7B, COX7C, COX8 and NDUFA4, which are encoded in the nuclear genome. The complex exists as a monomer or a dimer and forms supercomplexes (SCs) in the inner mitochondrial membrane with NADH-ubiquinone oxidoreductase (complex I, CI) and ubiquinol-cytochrome c oxidoreductase (cytochrome b-c1 complex, complex III, CIII), resulting in different assemblies (supercomplex SCI(1)III(2)IV(1) and megacomplex MCI(2)III(2)IV(2)) (By similarity). Found in a complex with TMEM177, COA6, COX18, COX20, SCO1 and SCO2. Interacts with TMEM177 in a COX20-dependent manner. Interacts with COX20. Interacts with COX16 (By similarity).</text>
</comment>
<comment type="subcellular location">
    <subcellularLocation>
        <location evidence="4">Mitochondrion inner membrane</location>
        <topology evidence="4">Multi-pass membrane protein</topology>
    </subcellularLocation>
</comment>
<comment type="similarity">
    <text evidence="5">Belongs to the cytochrome c oxidase subunit 2 family.</text>
</comment>
<proteinExistence type="inferred from homology"/>
<keyword id="KW-0186">Copper</keyword>
<keyword id="KW-0249">Electron transport</keyword>
<keyword id="KW-0460">Magnesium</keyword>
<keyword id="KW-0472">Membrane</keyword>
<keyword id="KW-0479">Metal-binding</keyword>
<keyword id="KW-0496">Mitochondrion</keyword>
<keyword id="KW-0999">Mitochondrion inner membrane</keyword>
<keyword id="KW-0597">Phosphoprotein</keyword>
<keyword id="KW-1185">Reference proteome</keyword>
<keyword id="KW-0679">Respiratory chain</keyword>
<keyword id="KW-1278">Translocase</keyword>
<keyword id="KW-0812">Transmembrane</keyword>
<keyword id="KW-1133">Transmembrane helix</keyword>
<keyword id="KW-0813">Transport</keyword>
<sequence length="227" mass="26044">MAHPFQTGLQDATSPIMEELLHFHDHTLMIVFLISSLVLYIISIMLTTKLTHTNTMDAQEVETVWTILPAIILIMIALPSLRILYMMDEINNPSLTVKTMGHQWYWSYEYTDYEDLSFDSYMTPTQELKPGELRLLEVDNRVVLPMEMTIRMLISSEDVLHSWAVPSLGLKTDAIPGRLNQTTLMAMRPGLYYGQCSEICGSNHSFMPIVLEMVPLSYFEKWSASML</sequence>
<dbReference type="EC" id="7.1.1.9"/>
<dbReference type="EMBL" id="DQ093077">
    <property type="protein sequence ID" value="AAZ83623.1"/>
    <property type="molecule type" value="Genomic_DNA"/>
</dbReference>
<dbReference type="EMBL" id="EF196663">
    <property type="protein sequence ID" value="ABM63255.1"/>
    <property type="molecule type" value="Genomic_DNA"/>
</dbReference>
<dbReference type="EMBL" id="EF212882">
    <property type="protein sequence ID" value="ABP38213.1"/>
    <property type="molecule type" value="Genomic_DNA"/>
</dbReference>
<dbReference type="EMBL" id="FM177761">
    <property type="protein sequence ID" value="CAQ68433.1"/>
    <property type="molecule type" value="Genomic_DNA"/>
</dbReference>
<dbReference type="SMR" id="Q2Y0B9"/>
<dbReference type="FunCoup" id="Q2Y0B9">
    <property type="interactions" value="9"/>
</dbReference>
<dbReference type="STRING" id="9646.ENSAMEP00000021356"/>
<dbReference type="KEGG" id="aml:5179728"/>
<dbReference type="CTD" id="4513"/>
<dbReference type="eggNOG" id="KOG4767">
    <property type="taxonomic scope" value="Eukaryota"/>
</dbReference>
<dbReference type="HOGENOM" id="CLU_036876_2_3_1"/>
<dbReference type="InParanoid" id="Q2Y0B9"/>
<dbReference type="OMA" id="WSYEYTD"/>
<dbReference type="OrthoDB" id="539285at2759"/>
<dbReference type="TreeFam" id="TF344269"/>
<dbReference type="Proteomes" id="UP000008912">
    <property type="component" value="Mitochondrion"/>
</dbReference>
<dbReference type="GO" id="GO:0005743">
    <property type="term" value="C:mitochondrial inner membrane"/>
    <property type="evidence" value="ECO:0007669"/>
    <property type="project" value="UniProtKB-SubCell"/>
</dbReference>
<dbReference type="GO" id="GO:0045277">
    <property type="term" value="C:respiratory chain complex IV"/>
    <property type="evidence" value="ECO:0000250"/>
    <property type="project" value="UniProtKB"/>
</dbReference>
<dbReference type="GO" id="GO:0005507">
    <property type="term" value="F:copper ion binding"/>
    <property type="evidence" value="ECO:0007669"/>
    <property type="project" value="InterPro"/>
</dbReference>
<dbReference type="GO" id="GO:0004129">
    <property type="term" value="F:cytochrome-c oxidase activity"/>
    <property type="evidence" value="ECO:0007669"/>
    <property type="project" value="UniProtKB-EC"/>
</dbReference>
<dbReference type="GO" id="GO:0042773">
    <property type="term" value="P:ATP synthesis coupled electron transport"/>
    <property type="evidence" value="ECO:0007669"/>
    <property type="project" value="TreeGrafter"/>
</dbReference>
<dbReference type="CDD" id="cd13912">
    <property type="entry name" value="CcO_II_C"/>
    <property type="match status" value="1"/>
</dbReference>
<dbReference type="FunFam" id="1.10.287.90:FF:000001">
    <property type="entry name" value="Cytochrome c oxidase subunit 2"/>
    <property type="match status" value="1"/>
</dbReference>
<dbReference type="FunFam" id="2.60.40.420:FF:000001">
    <property type="entry name" value="Cytochrome c oxidase subunit 2"/>
    <property type="match status" value="1"/>
</dbReference>
<dbReference type="Gene3D" id="1.10.287.90">
    <property type="match status" value="1"/>
</dbReference>
<dbReference type="Gene3D" id="2.60.40.420">
    <property type="entry name" value="Cupredoxins - blue copper proteins"/>
    <property type="match status" value="1"/>
</dbReference>
<dbReference type="InterPro" id="IPR045187">
    <property type="entry name" value="CcO_II"/>
</dbReference>
<dbReference type="InterPro" id="IPR002429">
    <property type="entry name" value="CcO_II-like_C"/>
</dbReference>
<dbReference type="InterPro" id="IPR034210">
    <property type="entry name" value="CcO_II_C"/>
</dbReference>
<dbReference type="InterPro" id="IPR001505">
    <property type="entry name" value="Copper_CuA"/>
</dbReference>
<dbReference type="InterPro" id="IPR008972">
    <property type="entry name" value="Cupredoxin"/>
</dbReference>
<dbReference type="InterPro" id="IPR014222">
    <property type="entry name" value="Cyt_c_oxidase_su2"/>
</dbReference>
<dbReference type="InterPro" id="IPR011759">
    <property type="entry name" value="Cyt_c_oxidase_su2_TM_dom"/>
</dbReference>
<dbReference type="InterPro" id="IPR036257">
    <property type="entry name" value="Cyt_c_oxidase_su2_TM_sf"/>
</dbReference>
<dbReference type="NCBIfam" id="TIGR02866">
    <property type="entry name" value="CoxB"/>
    <property type="match status" value="1"/>
</dbReference>
<dbReference type="PANTHER" id="PTHR22888:SF9">
    <property type="entry name" value="CYTOCHROME C OXIDASE SUBUNIT 2"/>
    <property type="match status" value="1"/>
</dbReference>
<dbReference type="PANTHER" id="PTHR22888">
    <property type="entry name" value="CYTOCHROME C OXIDASE, SUBUNIT II"/>
    <property type="match status" value="1"/>
</dbReference>
<dbReference type="Pfam" id="PF00116">
    <property type="entry name" value="COX2"/>
    <property type="match status" value="1"/>
</dbReference>
<dbReference type="Pfam" id="PF02790">
    <property type="entry name" value="COX2_TM"/>
    <property type="match status" value="1"/>
</dbReference>
<dbReference type="PRINTS" id="PR01166">
    <property type="entry name" value="CYCOXIDASEII"/>
</dbReference>
<dbReference type="SUPFAM" id="SSF49503">
    <property type="entry name" value="Cupredoxins"/>
    <property type="match status" value="1"/>
</dbReference>
<dbReference type="SUPFAM" id="SSF81464">
    <property type="entry name" value="Cytochrome c oxidase subunit II-like, transmembrane region"/>
    <property type="match status" value="1"/>
</dbReference>
<dbReference type="PROSITE" id="PS00078">
    <property type="entry name" value="COX2"/>
    <property type="match status" value="1"/>
</dbReference>
<dbReference type="PROSITE" id="PS50857">
    <property type="entry name" value="COX2_CUA"/>
    <property type="match status" value="1"/>
</dbReference>
<dbReference type="PROSITE" id="PS50999">
    <property type="entry name" value="COX2_TM"/>
    <property type="match status" value="1"/>
</dbReference>